<gene>
    <name type="primary">TUBB</name>
</gene>
<reference key="1">
    <citation type="journal article" date="1989" name="Nucleic Acids Res.">
        <title>Sequence of a cDNA clone encoding beta tubulin from Euglena gracilis.</title>
        <authorList>
            <person name="Schantz M.-L."/>
            <person name="Schantz R."/>
        </authorList>
    </citation>
    <scope>NUCLEOTIDE SEQUENCE [MRNA]</scope>
    <source>
        <strain>Z 1224 5/25</strain>
    </source>
</reference>
<organism>
    <name type="scientific">Euglena gracilis</name>
    <dbReference type="NCBI Taxonomy" id="3039"/>
    <lineage>
        <taxon>Eukaryota</taxon>
        <taxon>Discoba</taxon>
        <taxon>Euglenozoa</taxon>
        <taxon>Euglenida</taxon>
        <taxon>Spirocuta</taxon>
        <taxon>Euglenophyceae</taxon>
        <taxon>Euglenales</taxon>
        <taxon>Euglenaceae</taxon>
        <taxon>Euglena</taxon>
    </lineage>
</organism>
<sequence length="442" mass="49418">MREIVHIQAGQCGNQIGSKFWEVISDEQGVDPPDIPGDSDLQLERINVYYNEATGGRYVPAILMDLEPGTMDSVRAGPYGQIFRPDNFVFGQTGAGNNWAKGHYTEGPELIDSVLDVVRKEAESCDCLQGFQIAHSLGGGTGSGMGTLLISKIREEYPDRMMMTFSVIPSPKVSDTVVEPYNTTLSVHQLVENADEVMCIGNEALYDICLPTLKLTTPTFGHETLVSAVMSGVTCCLRFPGQLNSDLRKLAVNLIPFPRLHFFLVGFAPLTSRGSQQYRALTVPELTQQMFDAKNMMAASDPAHGRYLTASAMFRGRMSTKEVDEQMLNVQNKNSSYFVEWIPNNIKSSVCDIPPKGLKMSATFIGNNTAIQEMFKRVSEQFTAMFRRKAFLHWYTGEGMDEMEFTEAESNMNDLVSEYQQYQDATVEEEGEFDEEEDVEQY</sequence>
<feature type="chain" id="PRO_0000048346" description="Tubulin beta chain">
    <location>
        <begin position="1"/>
        <end position="442"/>
    </location>
</feature>
<feature type="binding site" evidence="2">
    <location>
        <position position="11"/>
    </location>
    <ligand>
        <name>GTP</name>
        <dbReference type="ChEBI" id="CHEBI:37565"/>
    </ligand>
</feature>
<feature type="binding site" evidence="1">
    <location>
        <position position="67"/>
    </location>
    <ligand>
        <name>GTP</name>
        <dbReference type="ChEBI" id="CHEBI:37565"/>
    </ligand>
</feature>
<feature type="binding site" evidence="1">
    <location>
        <position position="67"/>
    </location>
    <ligand>
        <name>Mg(2+)</name>
        <dbReference type="ChEBI" id="CHEBI:18420"/>
    </ligand>
</feature>
<feature type="binding site" evidence="2">
    <location>
        <position position="136"/>
    </location>
    <ligand>
        <name>GTP</name>
        <dbReference type="ChEBI" id="CHEBI:37565"/>
    </ligand>
</feature>
<feature type="binding site" evidence="2">
    <location>
        <position position="140"/>
    </location>
    <ligand>
        <name>GTP</name>
        <dbReference type="ChEBI" id="CHEBI:37565"/>
    </ligand>
</feature>
<feature type="binding site" evidence="2">
    <location>
        <position position="141"/>
    </location>
    <ligand>
        <name>GTP</name>
        <dbReference type="ChEBI" id="CHEBI:37565"/>
    </ligand>
</feature>
<feature type="binding site" evidence="2">
    <location>
        <position position="142"/>
    </location>
    <ligand>
        <name>GTP</name>
        <dbReference type="ChEBI" id="CHEBI:37565"/>
    </ligand>
</feature>
<feature type="binding site" evidence="2">
    <location>
        <position position="202"/>
    </location>
    <ligand>
        <name>GTP</name>
        <dbReference type="ChEBI" id="CHEBI:37565"/>
    </ligand>
</feature>
<evidence type="ECO:0000250" key="1">
    <source>
        <dbReference type="UniProtKB" id="P68363"/>
    </source>
</evidence>
<evidence type="ECO:0000250" key="2">
    <source>
        <dbReference type="UniProtKB" id="Q13509"/>
    </source>
</evidence>
<evidence type="ECO:0000305" key="3"/>
<name>TBB_EUGGR</name>
<protein>
    <recommendedName>
        <fullName>Tubulin beta chain</fullName>
    </recommendedName>
    <alternativeName>
        <fullName>Beta-tubulin</fullName>
    </alternativeName>
</protein>
<dbReference type="EMBL" id="X15797">
    <property type="protein sequence ID" value="CAA33797.1"/>
    <property type="molecule type" value="mRNA"/>
</dbReference>
<dbReference type="PIR" id="S05496">
    <property type="entry name" value="S05496"/>
</dbReference>
<dbReference type="SMR" id="P12457"/>
<dbReference type="GO" id="GO:0005737">
    <property type="term" value="C:cytoplasm"/>
    <property type="evidence" value="ECO:0007669"/>
    <property type="project" value="UniProtKB-KW"/>
</dbReference>
<dbReference type="GO" id="GO:0005874">
    <property type="term" value="C:microtubule"/>
    <property type="evidence" value="ECO:0007669"/>
    <property type="project" value="UniProtKB-KW"/>
</dbReference>
<dbReference type="GO" id="GO:0005525">
    <property type="term" value="F:GTP binding"/>
    <property type="evidence" value="ECO:0007669"/>
    <property type="project" value="UniProtKB-KW"/>
</dbReference>
<dbReference type="GO" id="GO:0003924">
    <property type="term" value="F:GTPase activity"/>
    <property type="evidence" value="ECO:0007669"/>
    <property type="project" value="InterPro"/>
</dbReference>
<dbReference type="GO" id="GO:0046872">
    <property type="term" value="F:metal ion binding"/>
    <property type="evidence" value="ECO:0007669"/>
    <property type="project" value="UniProtKB-KW"/>
</dbReference>
<dbReference type="GO" id="GO:0005200">
    <property type="term" value="F:structural constituent of cytoskeleton"/>
    <property type="evidence" value="ECO:0007669"/>
    <property type="project" value="InterPro"/>
</dbReference>
<dbReference type="GO" id="GO:0007017">
    <property type="term" value="P:microtubule-based process"/>
    <property type="evidence" value="ECO:0007669"/>
    <property type="project" value="InterPro"/>
</dbReference>
<dbReference type="CDD" id="cd02187">
    <property type="entry name" value="beta_tubulin"/>
    <property type="match status" value="1"/>
</dbReference>
<dbReference type="FunFam" id="1.10.287.600:FF:000006">
    <property type="entry name" value="Tubulin beta chain"/>
    <property type="match status" value="1"/>
</dbReference>
<dbReference type="FunFam" id="3.30.1330.20:FF:000002">
    <property type="entry name" value="Tubulin beta chain"/>
    <property type="match status" value="1"/>
</dbReference>
<dbReference type="FunFam" id="3.40.50.1440:FF:000006">
    <property type="entry name" value="Tubulin beta chain"/>
    <property type="match status" value="1"/>
</dbReference>
<dbReference type="Gene3D" id="1.10.287.600">
    <property type="entry name" value="Helix hairpin bin"/>
    <property type="match status" value="1"/>
</dbReference>
<dbReference type="Gene3D" id="3.30.1330.20">
    <property type="entry name" value="Tubulin/FtsZ, C-terminal domain"/>
    <property type="match status" value="1"/>
</dbReference>
<dbReference type="Gene3D" id="3.40.50.1440">
    <property type="entry name" value="Tubulin/FtsZ, GTPase domain"/>
    <property type="match status" value="1"/>
</dbReference>
<dbReference type="InterPro" id="IPR013838">
    <property type="entry name" value="Beta-tubulin_BS"/>
</dbReference>
<dbReference type="InterPro" id="IPR002453">
    <property type="entry name" value="Beta_tubulin"/>
</dbReference>
<dbReference type="InterPro" id="IPR008280">
    <property type="entry name" value="Tub_FtsZ_C"/>
</dbReference>
<dbReference type="InterPro" id="IPR000217">
    <property type="entry name" value="Tubulin"/>
</dbReference>
<dbReference type="InterPro" id="IPR037103">
    <property type="entry name" value="Tubulin/FtsZ-like_C"/>
</dbReference>
<dbReference type="InterPro" id="IPR018316">
    <property type="entry name" value="Tubulin/FtsZ_2-layer-sand-dom"/>
</dbReference>
<dbReference type="InterPro" id="IPR036525">
    <property type="entry name" value="Tubulin/FtsZ_GTPase_sf"/>
</dbReference>
<dbReference type="InterPro" id="IPR023123">
    <property type="entry name" value="Tubulin_C"/>
</dbReference>
<dbReference type="InterPro" id="IPR017975">
    <property type="entry name" value="Tubulin_CS"/>
</dbReference>
<dbReference type="InterPro" id="IPR003008">
    <property type="entry name" value="Tubulin_FtsZ_GTPase"/>
</dbReference>
<dbReference type="PANTHER" id="PTHR11588">
    <property type="entry name" value="TUBULIN"/>
    <property type="match status" value="1"/>
</dbReference>
<dbReference type="Pfam" id="PF00091">
    <property type="entry name" value="Tubulin"/>
    <property type="match status" value="1"/>
</dbReference>
<dbReference type="Pfam" id="PF03953">
    <property type="entry name" value="Tubulin_C"/>
    <property type="match status" value="1"/>
</dbReference>
<dbReference type="PRINTS" id="PR01163">
    <property type="entry name" value="BETATUBULIN"/>
</dbReference>
<dbReference type="PRINTS" id="PR01161">
    <property type="entry name" value="TUBULIN"/>
</dbReference>
<dbReference type="SMART" id="SM00864">
    <property type="entry name" value="Tubulin"/>
    <property type="match status" value="1"/>
</dbReference>
<dbReference type="SMART" id="SM00865">
    <property type="entry name" value="Tubulin_C"/>
    <property type="match status" value="1"/>
</dbReference>
<dbReference type="SUPFAM" id="SSF55307">
    <property type="entry name" value="Tubulin C-terminal domain-like"/>
    <property type="match status" value="1"/>
</dbReference>
<dbReference type="SUPFAM" id="SSF52490">
    <property type="entry name" value="Tubulin nucleotide-binding domain-like"/>
    <property type="match status" value="1"/>
</dbReference>
<dbReference type="PROSITE" id="PS00227">
    <property type="entry name" value="TUBULIN"/>
    <property type="match status" value="1"/>
</dbReference>
<dbReference type="PROSITE" id="PS00228">
    <property type="entry name" value="TUBULIN_B_AUTOREG"/>
    <property type="match status" value="1"/>
</dbReference>
<comment type="function">
    <text>Tubulin is the major constituent of microtubules, a cylinder consisting of laterally associated linear protofilaments composed of alpha- and beta-tubulin heterodimers. Microtubules grow by the addition of GTP-tubulin dimers to the microtubule end, where a stabilizing cap forms. Below the cap, tubulin dimers are in GDP-bound state, owing to GTPase activity of alpha-tubulin.</text>
</comment>
<comment type="cofactor">
    <cofactor evidence="1">
        <name>Mg(2+)</name>
        <dbReference type="ChEBI" id="CHEBI:18420"/>
    </cofactor>
</comment>
<comment type="subunit">
    <text>Dimer of alpha and beta chains. A typical microtubule is a hollow water-filled tube with an outer diameter of 25 nm and an inner diameter of 15 nM. Alpha-beta heterodimers associate head-to-tail to form protofilaments running lengthwise along the microtubule wall with the beta-tubulin subunit facing the microtubule plus end conferring a structural polarity. Microtubules usually have 13 protofilaments but different protofilament numbers can be found in some organisms and specialized cells.</text>
</comment>
<comment type="subcellular location">
    <subcellularLocation>
        <location>Cytoplasm</location>
        <location>Cytoskeleton</location>
    </subcellularLocation>
</comment>
<comment type="similarity">
    <text evidence="3">Belongs to the tubulin family.</text>
</comment>
<proteinExistence type="evidence at transcript level"/>
<keyword id="KW-0963">Cytoplasm</keyword>
<keyword id="KW-0206">Cytoskeleton</keyword>
<keyword id="KW-0342">GTP-binding</keyword>
<keyword id="KW-0460">Magnesium</keyword>
<keyword id="KW-0479">Metal-binding</keyword>
<keyword id="KW-0493">Microtubule</keyword>
<keyword id="KW-0547">Nucleotide-binding</keyword>
<accession>P12457</accession>